<organism evidence="7">
    <name type="scientific">Plasmodium berghei (strain Anka)</name>
    <dbReference type="NCBI Taxonomy" id="5823"/>
    <lineage>
        <taxon>Eukaryota</taxon>
        <taxon>Sar</taxon>
        <taxon>Alveolata</taxon>
        <taxon>Apicomplexa</taxon>
        <taxon>Aconoidasida</taxon>
        <taxon>Haemosporida</taxon>
        <taxon>Plasmodiidae</taxon>
        <taxon>Plasmodium</taxon>
        <taxon>Plasmodium (Vinckeia)</taxon>
    </lineage>
</organism>
<protein>
    <recommendedName>
        <fullName evidence="3">Sexual stage-specific protein G37</fullName>
    </recommendedName>
</protein>
<sequence>MKLYLVTFLFFVIYKNKTFVDCVTKKQDVYLDDEFKSFTFFFASSPSANFLSRIVHSNEAKFTQIKNKTDIWNKTIDKAYSINQVSNNIMRVYISLLSLFLFPYFSYIGIFGHSRNKANLTLSSLLAYFALLVSFFLFNGILNIGFVTSLPLVVAVLIFILGVSDCEINFLYKYTRYIFCFIISKLIYDVVTYISKDGANIFDYGFSGHIYMNLLRGKYYIVLKLIHLIILSLISLIIIKICPKIFSNNHLKSPISITFDKYIISFLCSLPIATAISQVFYLLSKTINPIDPSIFFMIPSSINFSSTGTIFSLSIWILMSYLMTFLRNKVEADFNNILNKIPNNLPDFI</sequence>
<accession>A0A509AET3</accession>
<reference evidence="7" key="1">
    <citation type="journal article" date="2014" name="BMC Biol.">
        <title>A comprehensive evaluation of rodent malaria parasite genomes and gene expression.</title>
        <authorList>
            <person name="Otto T.D."/>
            <person name="Bohme U."/>
            <person name="Jackson A.P."/>
            <person name="Hunt M."/>
            <person name="Franke-Fayard B."/>
            <person name="Hoeijmakers W.A."/>
            <person name="Religa A.A."/>
            <person name="Robertson L."/>
            <person name="Sanders M."/>
            <person name="Ogun S.A."/>
            <person name="Cunningham D."/>
            <person name="Erhart A."/>
            <person name="Billker O."/>
            <person name="Khan S.M."/>
            <person name="Stunnenberg H.G."/>
            <person name="Langhorne J."/>
            <person name="Holder A.A."/>
            <person name="Waters A.P."/>
            <person name="Newbold C.I."/>
            <person name="Pain A."/>
            <person name="Berriman M."/>
            <person name="Janse C.J."/>
        </authorList>
    </citation>
    <scope>NUCLEOTIDE SEQUENCE [LARGE SCALE GENOMIC DNA]</scope>
    <source>
        <strain evidence="7">ANKA</strain>
    </source>
</reference>
<reference evidence="4" key="2">
    <citation type="journal article" date="2018" name="Infect. Immun.">
        <title>Characterization of Plasmodium berghei Pbg37 as Both a Pre- and Postfertilization Antigen with Transmission-Blocking Potential.</title>
        <authorList>
            <person name="Liu F."/>
            <person name="Li L."/>
            <person name="Zheng W."/>
            <person name="He Y."/>
            <person name="Wang Y."/>
            <person name="Zhu X."/>
            <person name="Tsuboi T."/>
            <person name="Cui L."/>
            <person name="Wang M."/>
            <person name="Cao Y."/>
        </authorList>
    </citation>
    <scope>FUNCTION</scope>
    <scope>SUBCELLULAR LOCATION</scope>
    <scope>DEVELOPMENTAL STAGE</scope>
    <scope>DISRUPTION PHENOTYPE</scope>
    <scope>BIOTECHNOLOGY</scope>
    <scope>TOPOLOGY</scope>
</reference>
<evidence type="ECO:0000255" key="1"/>
<evidence type="ECO:0000269" key="2">
    <source>
    </source>
</evidence>
<evidence type="ECO:0000303" key="3">
    <source>
    </source>
</evidence>
<evidence type="ECO:0000305" key="4"/>
<evidence type="ECO:0000305" key="5">
    <source>
    </source>
</evidence>
<evidence type="ECO:0000312" key="6">
    <source>
        <dbReference type="EMBL" id="VUC54708.1"/>
    </source>
</evidence>
<evidence type="ECO:0000312" key="7">
    <source>
        <dbReference type="Proteomes" id="UP000074855"/>
    </source>
</evidence>
<dbReference type="EMBL" id="LK023121">
    <property type="protein sequence ID" value="VUC54708.1"/>
    <property type="molecule type" value="Genomic_DNA"/>
</dbReference>
<dbReference type="STRING" id="5823.A0A509AET3"/>
<dbReference type="VEuPathDB" id="PlasmoDB:PBANKA_0603300"/>
<dbReference type="InParanoid" id="A0A509AET3"/>
<dbReference type="OMA" id="GYLYMSL"/>
<dbReference type="Proteomes" id="UP000074855">
    <property type="component" value="Chromosome 6"/>
</dbReference>
<dbReference type="GO" id="GO:0005886">
    <property type="term" value="C:plasma membrane"/>
    <property type="evidence" value="ECO:0000314"/>
    <property type="project" value="UniProtKB"/>
</dbReference>
<dbReference type="GO" id="GO:0048232">
    <property type="term" value="P:male gamete generation"/>
    <property type="evidence" value="ECO:0000315"/>
    <property type="project" value="UniProtKB"/>
</dbReference>
<gene>
    <name evidence="4" type="primary">G37</name>
    <name evidence="3" type="synonym">pbg37</name>
    <name evidence="6" type="ORF">PBANKA_0603300</name>
</gene>
<keyword id="KW-1003">Cell membrane</keyword>
<keyword id="KW-0472">Membrane</keyword>
<keyword id="KW-1185">Reference proteome</keyword>
<keyword id="KW-0732">Signal</keyword>
<keyword id="KW-0812">Transmembrane</keyword>
<keyword id="KW-1133">Transmembrane helix</keyword>
<name>PBG37_PLABA</name>
<proteinExistence type="evidence at protein level"/>
<comment type="function">
    <text evidence="2">Involved in the development of male gametocytes.</text>
</comment>
<comment type="subcellular location">
    <subcellularLocation>
        <location evidence="2">Cell membrane</location>
        <topology evidence="1">Multi-pass membrane protein</topology>
    </subcellularLocation>
    <text evidence="2">In exflagellating male gametes, mostly localizes to the residual body.</text>
</comment>
<comment type="developmental stage">
    <text evidence="2">Expressed in gametocytes; expression is higher in male gametocytes compared to female gametocytes (at protein level) (PubMed:29866905). Expressed in zygotes and, to a lesser extent, in ookinetes (at protein level) (PubMed:29866905). Not expressed in schizonts (PubMed:29866905).</text>
</comment>
<comment type="disruption phenotype">
    <text evidence="2">Severe developmental defects in male gametocytogenesis leading to a reduction in the number of mature gametocytes (PubMed:29866905). Impaired male gametocyte exflagellation. Female gametogenesis is normal (PubMed:29866905). Defects in zygote-to-ookinete development (PubMed:29866905). Severe reduction in the number of oocysts in the midgut of mosquitoes fed on mice infected with knockout parasites (PubMed:29866905). Normal asexual development in host erythrocytes (PubMed:29866905).</text>
</comment>
<comment type="biotechnology">
    <text evidence="2">Antibodies against G37/pbg37 partially reduce parasite transmission during the mosquito vector stage by preventing male gametocyte exflagellation and fertilization.</text>
</comment>
<feature type="signal peptide" evidence="1">
    <location>
        <begin position="1"/>
        <end position="18"/>
    </location>
</feature>
<feature type="chain" id="PRO_5021295446" description="Sexual stage-specific protein G37" evidence="1">
    <location>
        <begin position="19"/>
        <end position="349"/>
    </location>
</feature>
<feature type="topological domain" description="Extracellular" evidence="5">
    <location>
        <begin position="19"/>
        <end position="91"/>
    </location>
</feature>
<feature type="transmembrane region" description="Helical" evidence="1">
    <location>
        <begin position="92"/>
        <end position="112"/>
    </location>
</feature>
<feature type="topological domain" description="Cytoplasmic" evidence="4">
    <location>
        <begin position="113"/>
        <end position="117"/>
    </location>
</feature>
<feature type="transmembrane region" description="Helical" evidence="1">
    <location>
        <begin position="118"/>
        <end position="138"/>
    </location>
</feature>
<feature type="topological domain" description="Extracellular" evidence="4">
    <location>
        <begin position="139"/>
        <end position="140"/>
    </location>
</feature>
<feature type="transmembrane region" description="Helical" evidence="1">
    <location>
        <begin position="141"/>
        <end position="161"/>
    </location>
</feature>
<feature type="topological domain" description="Cytoplasmic" evidence="4">
    <location>
        <begin position="162"/>
        <end position="176"/>
    </location>
</feature>
<feature type="transmembrane region" description="Helical" evidence="1">
    <location>
        <begin position="177"/>
        <end position="197"/>
    </location>
</feature>
<feature type="topological domain" description="Extracellular" evidence="4">
    <location>
        <begin position="198"/>
        <end position="218"/>
    </location>
</feature>
<feature type="transmembrane region" description="Helical" evidence="1">
    <location>
        <begin position="219"/>
        <end position="239"/>
    </location>
</feature>
<feature type="topological domain" description="Cytoplasmic" evidence="4">
    <location>
        <begin position="240"/>
        <end position="262"/>
    </location>
</feature>
<feature type="transmembrane region" description="Helical" evidence="1">
    <location>
        <begin position="263"/>
        <end position="283"/>
    </location>
</feature>
<feature type="topological domain" description="Extracellular" evidence="4">
    <location>
        <begin position="284"/>
        <end position="305"/>
    </location>
</feature>
<feature type="transmembrane region" description="Helical" evidence="1">
    <location>
        <begin position="306"/>
        <end position="326"/>
    </location>
</feature>
<feature type="topological domain" description="Cytoplasmic" evidence="4">
    <location>
        <begin position="327"/>
        <end position="349"/>
    </location>
</feature>